<name>Y983_AQUAE</name>
<reference key="1">
    <citation type="journal article" date="1998" name="Nature">
        <title>The complete genome of the hyperthermophilic bacterium Aquifex aeolicus.</title>
        <authorList>
            <person name="Deckert G."/>
            <person name="Warren P.V."/>
            <person name="Gaasterland T."/>
            <person name="Young W.G."/>
            <person name="Lenox A.L."/>
            <person name="Graham D.E."/>
            <person name="Overbeek R."/>
            <person name="Snead M.A."/>
            <person name="Keller M."/>
            <person name="Aujay M."/>
            <person name="Huber R."/>
            <person name="Feldman R.A."/>
            <person name="Short J.M."/>
            <person name="Olsen G.J."/>
            <person name="Swanson R.V."/>
        </authorList>
    </citation>
    <scope>NUCLEOTIDE SEQUENCE [LARGE SCALE GENOMIC DNA]</scope>
    <source>
        <strain>VF5</strain>
    </source>
</reference>
<protein>
    <recommendedName>
        <fullName>Uncharacterized protein aq_983</fullName>
    </recommendedName>
</protein>
<sequence>MNVVLSLETWDIDDTLALLFLAHYHQKGKIDLLAVEVDKGPPSQNNYVKYLLQKIHLNVPVFSRNVEEDKSELPEYYYELFEDLKLESQESQRREELLDLLKGKEFKLVVGGSLNLIPFLLENSVFPEEIFVQGGFAGKNITGKTHEKFGDRYFKATFNFNKDVKATLRTFELLKEFRIPTYLISKNLNHTILIKEEDIPQKEPSTKAQELYFEILKKYLRKYRKEKSLHDVYACIAMFKKNLFVWKEVIPVYRKGRKYTEWGSVEAKSNIWITVDGKREEIKDYAVFRKEF</sequence>
<feature type="chain" id="PRO_0000186892" description="Uncharacterized protein aq_983">
    <location>
        <begin position="1"/>
        <end position="292"/>
    </location>
</feature>
<keyword id="KW-1185">Reference proteome</keyword>
<proteinExistence type="predicted"/>
<gene>
    <name type="ordered locus">aq_983</name>
</gene>
<dbReference type="EMBL" id="AE000657">
    <property type="protein sequence ID" value="AAC07075.1"/>
    <property type="molecule type" value="Genomic_DNA"/>
</dbReference>
<dbReference type="PIR" id="B70385">
    <property type="entry name" value="B70385"/>
</dbReference>
<dbReference type="RefSeq" id="NP_213672.1">
    <property type="nucleotide sequence ID" value="NC_000918.1"/>
</dbReference>
<dbReference type="RefSeq" id="WP_010880610.1">
    <property type="nucleotide sequence ID" value="NC_000918.1"/>
</dbReference>
<dbReference type="SMR" id="O67109"/>
<dbReference type="STRING" id="224324.aq_983"/>
<dbReference type="EnsemblBacteria" id="AAC07075">
    <property type="protein sequence ID" value="AAC07075"/>
    <property type="gene ID" value="aq_983"/>
</dbReference>
<dbReference type="KEGG" id="aae:aq_983"/>
<dbReference type="eggNOG" id="COG1957">
    <property type="taxonomic scope" value="Bacteria"/>
</dbReference>
<dbReference type="HOGENOM" id="CLU_962053_0_0_0"/>
<dbReference type="InParanoid" id="O67109"/>
<dbReference type="OrthoDB" id="9797882at2"/>
<dbReference type="Proteomes" id="UP000000798">
    <property type="component" value="Chromosome"/>
</dbReference>
<dbReference type="GO" id="GO:0016799">
    <property type="term" value="F:hydrolase activity, hydrolyzing N-glycosyl compounds"/>
    <property type="evidence" value="ECO:0007669"/>
    <property type="project" value="InterPro"/>
</dbReference>
<dbReference type="Gene3D" id="3.90.245.10">
    <property type="entry name" value="Ribonucleoside hydrolase-like"/>
    <property type="match status" value="1"/>
</dbReference>
<dbReference type="InterPro" id="IPR001910">
    <property type="entry name" value="Inosine/uridine_hydrolase_dom"/>
</dbReference>
<dbReference type="InterPro" id="IPR036452">
    <property type="entry name" value="Ribo_hydro-like"/>
</dbReference>
<dbReference type="Pfam" id="PF01156">
    <property type="entry name" value="IU_nuc_hydro"/>
    <property type="match status" value="1"/>
</dbReference>
<dbReference type="SUPFAM" id="SSF53590">
    <property type="entry name" value="Nucleoside hydrolase"/>
    <property type="match status" value="1"/>
</dbReference>
<accession>O67109</accession>
<organism>
    <name type="scientific">Aquifex aeolicus (strain VF5)</name>
    <dbReference type="NCBI Taxonomy" id="224324"/>
    <lineage>
        <taxon>Bacteria</taxon>
        <taxon>Pseudomonadati</taxon>
        <taxon>Aquificota</taxon>
        <taxon>Aquificia</taxon>
        <taxon>Aquificales</taxon>
        <taxon>Aquificaceae</taxon>
        <taxon>Aquifex</taxon>
    </lineage>
</organism>